<keyword id="KW-0067">ATP-binding</keyword>
<keyword id="KW-0347">Helicase</keyword>
<keyword id="KW-0378">Hydrolase</keyword>
<keyword id="KW-0426">Late protein</keyword>
<keyword id="KW-0547">Nucleotide-binding</keyword>
<keyword id="KW-0804">Transcription</keyword>
<keyword id="KW-0805">Transcription regulation</keyword>
<keyword id="KW-0946">Virion</keyword>
<organism>
    <name type="scientific">African swine fever virus (isolate Pig/Kenya/KEN-50/1950)</name>
    <name type="common">ASFV</name>
    <dbReference type="NCBI Taxonomy" id="561445"/>
    <lineage>
        <taxon>Viruses</taxon>
        <taxon>Varidnaviria</taxon>
        <taxon>Bamfordvirae</taxon>
        <taxon>Nucleocytoviricota</taxon>
        <taxon>Pokkesviricetes</taxon>
        <taxon>Asfuvirales</taxon>
        <taxon>Asfarviridae</taxon>
        <taxon>Asfivirus</taxon>
        <taxon>African swine fever virus</taxon>
    </lineage>
</organism>
<gene>
    <name type="ordered locus">Ken-118</name>
</gene>
<reference key="1">
    <citation type="submission" date="2003-03" db="EMBL/GenBank/DDBJ databases">
        <title>African swine fever virus genomes.</title>
        <authorList>
            <person name="Kutish G.F."/>
            <person name="Rock D.L."/>
        </authorList>
    </citation>
    <scope>NUCLEOTIDE SEQUENCE [LARGE SCALE GENOMIC DNA]</scope>
</reference>
<proteinExistence type="inferred from homology"/>
<comment type="function">
    <text evidence="1">Putative initation factor.</text>
</comment>
<comment type="catalytic activity">
    <reaction evidence="1">
        <text>ATP + H2O = ADP + phosphate + H(+)</text>
        <dbReference type="Rhea" id="RHEA:13065"/>
        <dbReference type="ChEBI" id="CHEBI:15377"/>
        <dbReference type="ChEBI" id="CHEBI:15378"/>
        <dbReference type="ChEBI" id="CHEBI:30616"/>
        <dbReference type="ChEBI" id="CHEBI:43474"/>
        <dbReference type="ChEBI" id="CHEBI:456216"/>
        <dbReference type="EC" id="3.6.4.13"/>
    </reaction>
</comment>
<comment type="subcellular location">
    <subcellularLocation>
        <location evidence="2">Virion</location>
    </subcellularLocation>
    <text evidence="2">Found in association with viral nucleoid.</text>
</comment>
<comment type="induction">
    <text evidence="2">Expressed in the late phase of the viral replicative cycle.</text>
</comment>
<comment type="similarity">
    <text evidence="5">Belongs to the DEAD box helicase family. DEAH subfamily.</text>
</comment>
<name>ETFS_ASFK5</name>
<accession>P0C9A7</accession>
<sequence length="1134" mass="129396">MAYPELDAADFLQQLARRKEFKSLISPPVDQKKLIHDLRSHFVQIGGPGCEKGGRAFFPCDPYASPFPSIKGLQLHNAQLFVQNFQNPNTPYSRLLLNWQTGTGKSIAAIAIARQFMNHYMNFIENAPWIFVVGFTRAIIQTEMLRRPELGFVSYKEVAELHRLLHIAKQSGSTTSVESRHLNGFVSTLKRRLTDRNRGGFFQFYGYKEFASKLFNITSKGEEKNFDVLSLFHRSDEAEDTLNENDISQFVQKISEAESNGLIRVNQKIMEQLRGGLLIADEIHNVYNIQERNNYGIALQYVLDAFPPHQAPRAVFMSATPVTGSVMEYVDLLNLLVPRHELPNGQPLQRQQLFDNSGHSVKWKKDALALVERLSTGRVSFLLDTNTNYYPERIFAGKMLSYRNEMLPYLHFIECPMSDYQLETLKQLGPDPKISSNAYSIYDMVFPNPKFSKQTEPKAYGLFNSTETPAALSMASTDWLLENGVQIIEPSRRTPFNVSGSFLSLQPPTHISGLAFYSGKYTQMMKDILSIIRQGRGKILIYHNRVRMSGVLILQEILQSNGILNEVSSPVGTTRCSICAAIRDDHTTHSDHQFIPARFTILHSEIEPAVRERSLALFNASSNLEGHQLRILIGSKVIVEGLNFQAVRYEMIMSLPLDIPRLIQVFGRVVRKNSHMELPPNERNVTIYLYVSTTPDGGPELAKYAQKLKEYILIQEGDKALRKHAIDGFTNQIKIDKPMLESLPLSPSITPANVGATVLNTFEAYGYGEQEVKTISNIIISLFMARPVWTYSELWKAVSTPKLIQGITIDNKLFSEDNFALALVSLCYSKNQCKELCIQNRLCTIMHVPAKPEHLYIAAVLNYKKEPVLDIETYIRDFQPPTMHSIRITKYLEHSQTKEPFQVLYEKFQKDFQDEPMEQVLIHYPASFHYTMLEALIIDNLAGMGALVEVYKKFFIAFSKKDIQPFPDIFKIISHVPGDDDTLVGYATEDSVRLITSRQDKTWHEIPLYMLNINVKRKENDIVIGYMESKGKTLKFKIRPPIQVLKKNEITDIRMLNRGAVCETRGREEQQKIADQLGISLNLTKISAIKLCLLIRNTLLQKEMEARNQPNGMQDGIRWFYLFNDKMPSLVHTS</sequence>
<evidence type="ECO:0000250" key="1">
    <source>
        <dbReference type="UniProtKB" id="P04308"/>
    </source>
</evidence>
<evidence type="ECO:0000250" key="2">
    <source>
        <dbReference type="UniProtKB" id="Q89525"/>
    </source>
</evidence>
<evidence type="ECO:0000255" key="3">
    <source>
        <dbReference type="PROSITE-ProRule" id="PRU00541"/>
    </source>
</evidence>
<evidence type="ECO:0000255" key="4">
    <source>
        <dbReference type="PROSITE-ProRule" id="PRU00542"/>
    </source>
</evidence>
<evidence type="ECO:0000305" key="5"/>
<protein>
    <recommendedName>
        <fullName evidence="2">Early transcription factor large subunit homolog</fullName>
        <ecNumber>3.6.4.13</ecNumber>
    </recommendedName>
    <alternativeName>
        <fullName evidence="2">ATP-dependent helicase VETFS homolog</fullName>
    </alternativeName>
</protein>
<feature type="chain" id="PRO_0000373111" description="Early transcription factor large subunit homolog">
    <location>
        <begin position="1"/>
        <end position="1134"/>
    </location>
</feature>
<feature type="domain" description="Helicase ATP-binding" evidence="3">
    <location>
        <begin position="52"/>
        <end position="352"/>
    </location>
</feature>
<feature type="domain" description="Helicase C-terminal" evidence="4">
    <location>
        <begin position="524"/>
        <end position="725"/>
    </location>
</feature>
<feature type="short sequence motif" description="DEAH box">
    <location>
        <begin position="281"/>
        <end position="284"/>
    </location>
</feature>
<feature type="binding site" evidence="3">
    <location>
        <begin position="99"/>
        <end position="106"/>
    </location>
    <ligand>
        <name>ATP</name>
        <dbReference type="ChEBI" id="CHEBI:30616"/>
    </ligand>
</feature>
<organismHost>
    <name type="scientific">Ornithodoros</name>
    <name type="common">relapsing fever ticks</name>
    <dbReference type="NCBI Taxonomy" id="6937"/>
</organismHost>
<organismHost>
    <name type="scientific">Phacochoerus aethiopicus</name>
    <name type="common">Warthog</name>
    <dbReference type="NCBI Taxonomy" id="85517"/>
</organismHost>
<organismHost>
    <name type="scientific">Phacochoerus africanus</name>
    <name type="common">Warthog</name>
    <dbReference type="NCBI Taxonomy" id="41426"/>
</organismHost>
<organismHost>
    <name type="scientific">Potamochoerus larvatus</name>
    <name type="common">Bushpig</name>
    <dbReference type="NCBI Taxonomy" id="273792"/>
</organismHost>
<organismHost>
    <name type="scientific">Sus scrofa</name>
    <name type="common">Pig</name>
    <dbReference type="NCBI Taxonomy" id="9823"/>
</organismHost>
<dbReference type="EC" id="3.6.4.13"/>
<dbReference type="EMBL" id="AY261360">
    <property type="status" value="NOT_ANNOTATED_CDS"/>
    <property type="molecule type" value="Genomic_DNA"/>
</dbReference>
<dbReference type="Proteomes" id="UP000000861">
    <property type="component" value="Segment"/>
</dbReference>
<dbReference type="GO" id="GO:0044423">
    <property type="term" value="C:virion component"/>
    <property type="evidence" value="ECO:0007669"/>
    <property type="project" value="UniProtKB-KW"/>
</dbReference>
<dbReference type="GO" id="GO:0005524">
    <property type="term" value="F:ATP binding"/>
    <property type="evidence" value="ECO:0007669"/>
    <property type="project" value="UniProtKB-KW"/>
</dbReference>
<dbReference type="GO" id="GO:0016887">
    <property type="term" value="F:ATP hydrolysis activity"/>
    <property type="evidence" value="ECO:0007669"/>
    <property type="project" value="RHEA"/>
</dbReference>
<dbReference type="GO" id="GO:0003724">
    <property type="term" value="F:RNA helicase activity"/>
    <property type="evidence" value="ECO:0007669"/>
    <property type="project" value="UniProtKB-EC"/>
</dbReference>
<dbReference type="Gene3D" id="3.40.50.300">
    <property type="entry name" value="P-loop containing nucleotide triphosphate hydrolases"/>
    <property type="match status" value="2"/>
</dbReference>
<dbReference type="InterPro" id="IPR001650">
    <property type="entry name" value="Helicase_C-like"/>
</dbReference>
<dbReference type="InterPro" id="IPR027417">
    <property type="entry name" value="P-loop_NTPase"/>
</dbReference>
<dbReference type="Pfam" id="PF00271">
    <property type="entry name" value="Helicase_C"/>
    <property type="match status" value="1"/>
</dbReference>
<dbReference type="SMART" id="SM00490">
    <property type="entry name" value="HELICc"/>
    <property type="match status" value="1"/>
</dbReference>
<dbReference type="SUPFAM" id="SSF52540">
    <property type="entry name" value="P-loop containing nucleoside triphosphate hydrolases"/>
    <property type="match status" value="1"/>
</dbReference>
<dbReference type="PROSITE" id="PS51192">
    <property type="entry name" value="HELICASE_ATP_BIND_1"/>
    <property type="match status" value="1"/>
</dbReference>
<dbReference type="PROSITE" id="PS51194">
    <property type="entry name" value="HELICASE_CTER"/>
    <property type="match status" value="1"/>
</dbReference>